<gene>
    <name evidence="8" type="primary">FLACC1</name>
    <name type="synonym">ALS2CR12</name>
</gene>
<feature type="chain" id="PRO_0000064540" description="Flagellum-associated coiled-coil domain-containing protein 1">
    <location>
        <begin position="1"/>
        <end position="445"/>
    </location>
</feature>
<feature type="region of interest" description="Disordered" evidence="3">
    <location>
        <begin position="26"/>
        <end position="47"/>
    </location>
</feature>
<feature type="coiled-coil region" evidence="2">
    <location>
        <begin position="122"/>
        <end position="226"/>
    </location>
</feature>
<feature type="coiled-coil region" evidence="2">
    <location>
        <begin position="283"/>
        <end position="315"/>
    </location>
</feature>
<feature type="coiled-coil region" evidence="2">
    <location>
        <begin position="387"/>
        <end position="414"/>
    </location>
</feature>
<feature type="compositionally biased region" description="Polar residues" evidence="3">
    <location>
        <begin position="30"/>
        <end position="39"/>
    </location>
</feature>
<feature type="modified residue" description="N6-acetyllysine" evidence="9">
    <location>
        <position position="376"/>
    </location>
</feature>
<feature type="splice variant" id="VSP_046184" description="In isoform 2." evidence="6">
    <location>
        <begin position="315"/>
        <end position="337"/>
    </location>
</feature>
<feature type="sequence variant" id="VAR_045625" description="In dbSNP:rs13014235." evidence="4 5">
    <original>V</original>
    <variation>L</variation>
    <location>
        <position position="43"/>
    </location>
</feature>
<comment type="interaction">
    <interactant intactId="EBI-750451">
        <id>Q96Q35</id>
    </interactant>
    <interactant intactId="EBI-749295">
        <id>O75716</id>
        <label>STK16</label>
    </interactant>
    <organismsDiffer>false</organismsDiffer>
    <experiments>3</experiments>
</comment>
<comment type="interaction">
    <interactant intactId="EBI-750451">
        <id>Q96Q35</id>
    </interactant>
    <interactant intactId="EBI-749441">
        <id>O00204</id>
        <label>SULT2B1</label>
    </interactant>
    <organismsDiffer>false</organismsDiffer>
    <experiments>8</experiments>
</comment>
<comment type="interaction">
    <interactant intactId="EBI-750451">
        <id>Q96Q35</id>
    </interactant>
    <interactant intactId="EBI-749995">
        <id>P56279</id>
        <label>TCL1A</label>
    </interactant>
    <organismsDiffer>false</organismsDiffer>
    <experiments>3</experiments>
</comment>
<comment type="interaction">
    <interactant intactId="EBI-750451">
        <id>Q96Q35</id>
    </interactant>
    <interactant intactId="EBI-2825190">
        <id>Q86UY0</id>
        <label>TXNDC5</label>
    </interactant>
    <organismsDiffer>false</organismsDiffer>
    <experiments>3</experiments>
</comment>
<comment type="interaction">
    <interactant intactId="EBI-11533409">
        <id>Q96Q35-2</id>
    </interactant>
    <interactant intactId="EBI-724719">
        <id>Q9UI12</id>
        <label>ATP6V1H</label>
    </interactant>
    <organismsDiffer>false</organismsDiffer>
    <experiments>3</experiments>
</comment>
<comment type="interaction">
    <interactant intactId="EBI-11533409">
        <id>Q96Q35-2</id>
    </interactant>
    <interactant intactId="EBI-2105445">
        <id>P51451</id>
        <label>BLK</label>
    </interactant>
    <organismsDiffer>false</organismsDiffer>
    <experiments>5</experiments>
</comment>
<comment type="interaction">
    <interactant intactId="EBI-11533409">
        <id>Q96Q35-2</id>
    </interactant>
    <interactant intactId="EBI-886">
        <id>P46108</id>
        <label>CRK</label>
    </interactant>
    <organismsDiffer>false</organismsDiffer>
    <experiments>3</experiments>
</comment>
<comment type="interaction">
    <interactant intactId="EBI-11533409">
        <id>Q96Q35-2</id>
    </interactant>
    <interactant intactId="EBI-11988027">
        <id>Q9NRI5-2</id>
        <label>DISC1</label>
    </interactant>
    <organismsDiffer>false</organismsDiffer>
    <experiments>3</experiments>
</comment>
<comment type="interaction">
    <interactant intactId="EBI-11533409">
        <id>Q96Q35-2</id>
    </interactant>
    <interactant intactId="EBI-739789">
        <id>Q92997</id>
        <label>DVL3</label>
    </interactant>
    <organismsDiffer>false</organismsDiffer>
    <experiments>3</experiments>
</comment>
<comment type="interaction">
    <interactant intactId="EBI-11533409">
        <id>Q96Q35-2</id>
    </interactant>
    <interactant intactId="EBI-6658203">
        <id>Q86YD7</id>
        <label>FAM90A1</label>
    </interactant>
    <organismsDiffer>false</organismsDiffer>
    <experiments>3</experiments>
</comment>
<comment type="interaction">
    <interactant intactId="EBI-11533409">
        <id>Q96Q35-2</id>
    </interactant>
    <interactant intactId="EBI-715611">
        <id>Q9C086</id>
        <label>INO80B</label>
    </interactant>
    <organismsDiffer>false</organismsDiffer>
    <experiments>3</experiments>
</comment>
<comment type="interaction">
    <interactant intactId="EBI-11533409">
        <id>Q96Q35-2</id>
    </interactant>
    <interactant intactId="EBI-10274069">
        <id>Q8TCE9</id>
        <label>LGALS14</label>
    </interactant>
    <organismsDiffer>false</organismsDiffer>
    <experiments>3</experiments>
</comment>
<comment type="interaction">
    <interactant intactId="EBI-11533409">
        <id>Q96Q35-2</id>
    </interactant>
    <interactant intactId="EBI-2341787">
        <id>Q17RB8</id>
        <label>LONRF1</label>
    </interactant>
    <organismsDiffer>false</organismsDiffer>
    <experiments>3</experiments>
</comment>
<comment type="interaction">
    <interactant intactId="EBI-11533409">
        <id>Q96Q35-2</id>
    </interactant>
    <interactant intactId="EBI-1567797">
        <id>Q8WWY3</id>
        <label>PRPF31</label>
    </interactant>
    <organismsDiffer>false</organismsDiffer>
    <experiments>3</experiments>
</comment>
<comment type="interaction">
    <interactant intactId="EBI-11533409">
        <id>Q96Q35-2</id>
    </interactant>
    <interactant intactId="EBI-742688">
        <id>Q9NZD8</id>
        <label>SPG21</label>
    </interactant>
    <organismsDiffer>false</organismsDiffer>
    <experiments>3</experiments>
</comment>
<comment type="interaction">
    <interactant intactId="EBI-11533409">
        <id>Q96Q35-2</id>
    </interactant>
    <interactant intactId="EBI-17564583">
        <id>Q16385-2</id>
        <label>SSX2B</label>
    </interactant>
    <organismsDiffer>false</organismsDiffer>
    <experiments>3</experiments>
</comment>
<comment type="interaction">
    <interactant intactId="EBI-11533409">
        <id>Q96Q35-2</id>
    </interactant>
    <interactant intactId="EBI-745513">
        <id>O60224</id>
        <label>SSX4B</label>
    </interactant>
    <organismsDiffer>false</organismsDiffer>
    <experiments>3</experiments>
</comment>
<comment type="interaction">
    <interactant intactId="EBI-11533409">
        <id>Q96Q35-2</id>
    </interactant>
    <interactant intactId="EBI-749441">
        <id>O00204</id>
        <label>SULT2B1</label>
    </interactant>
    <organismsDiffer>false</organismsDiffer>
    <experiments>8</experiments>
</comment>
<comment type="interaction">
    <interactant intactId="EBI-11533409">
        <id>Q96Q35-2</id>
    </interactant>
    <interactant intactId="EBI-11139477">
        <id>Q96N21</id>
        <label>TEPSIN</label>
    </interactant>
    <organismsDiffer>false</organismsDiffer>
    <experiments>3</experiments>
</comment>
<comment type="interaction">
    <interactant intactId="EBI-11533409">
        <id>Q96Q35-2</id>
    </interactant>
    <interactant intactId="EBI-725997">
        <id>Q8WV44</id>
        <label>TRIM41</label>
    </interactant>
    <organismsDiffer>false</organismsDiffer>
    <experiments>3</experiments>
</comment>
<comment type="interaction">
    <interactant intactId="EBI-11533409">
        <id>Q96Q35-2</id>
    </interactant>
    <interactant intactId="EBI-515331">
        <id>P07947</id>
        <label>YES1</label>
    </interactant>
    <organismsDiffer>false</organismsDiffer>
    <experiments>3</experiments>
</comment>
<comment type="subcellular location">
    <subcellularLocation>
        <location evidence="1">Cytoplasm</location>
    </subcellularLocation>
    <subcellularLocation>
        <location evidence="1">Cytoplasmic granule</location>
    </subcellularLocation>
    <subcellularLocation>
        <location evidence="1">Cell projection</location>
        <location evidence="1">Cilium</location>
        <location evidence="1">Flagellum</location>
    </subcellularLocation>
    <text evidence="1">Expressed in the principal piece of the sperm tail, nearest the sperm head.</text>
</comment>
<comment type="alternative products">
    <event type="alternative splicing"/>
    <isoform>
        <id>Q96Q35-1</id>
        <name>1</name>
        <sequence type="displayed"/>
    </isoform>
    <isoform>
        <id>Q96Q35-2</id>
        <name>2</name>
        <sequence type="described" ref="VSP_046184"/>
    </isoform>
</comment>
<organism>
    <name type="scientific">Homo sapiens</name>
    <name type="common">Human</name>
    <dbReference type="NCBI Taxonomy" id="9606"/>
    <lineage>
        <taxon>Eukaryota</taxon>
        <taxon>Metazoa</taxon>
        <taxon>Chordata</taxon>
        <taxon>Craniata</taxon>
        <taxon>Vertebrata</taxon>
        <taxon>Euteleostomi</taxon>
        <taxon>Mammalia</taxon>
        <taxon>Eutheria</taxon>
        <taxon>Euarchontoglires</taxon>
        <taxon>Primates</taxon>
        <taxon>Haplorrhini</taxon>
        <taxon>Catarrhini</taxon>
        <taxon>Hominidae</taxon>
        <taxon>Homo</taxon>
    </lineage>
</organism>
<dbReference type="EMBL" id="AB053314">
    <property type="protein sequence ID" value="BAB69022.1"/>
    <property type="molecule type" value="mRNA"/>
</dbReference>
<dbReference type="EMBL" id="AC007256">
    <property type="protein sequence ID" value="AAY24226.1"/>
    <property type="molecule type" value="Genomic_DNA"/>
</dbReference>
<dbReference type="EMBL" id="CH471063">
    <property type="protein sequence ID" value="EAW70267.1"/>
    <property type="molecule type" value="Genomic_DNA"/>
</dbReference>
<dbReference type="EMBL" id="CH471063">
    <property type="protein sequence ID" value="EAW70269.1"/>
    <property type="molecule type" value="Genomic_DNA"/>
</dbReference>
<dbReference type="EMBL" id="BC031603">
    <property type="protein sequence ID" value="AAH31603.1"/>
    <property type="molecule type" value="mRNA"/>
</dbReference>
<dbReference type="CCDS" id="CCDS2346.1">
    <molecule id="Q96Q35-1"/>
</dbReference>
<dbReference type="CCDS" id="CCDS46488.1">
    <molecule id="Q96Q35-2"/>
</dbReference>
<dbReference type="RefSeq" id="NP_001120863.1">
    <molecule id="Q96Q35-2"/>
    <property type="nucleotide sequence ID" value="NM_001127391.3"/>
</dbReference>
<dbReference type="RefSeq" id="NP_001276922.1">
    <molecule id="Q96Q35-2"/>
    <property type="nucleotide sequence ID" value="NM_001289993.2"/>
</dbReference>
<dbReference type="RefSeq" id="NP_631902.2">
    <molecule id="Q96Q35-1"/>
    <property type="nucleotide sequence ID" value="NM_139163.4"/>
</dbReference>
<dbReference type="RefSeq" id="XP_024308464.1">
    <molecule id="Q96Q35-1"/>
    <property type="nucleotide sequence ID" value="XM_024452696.2"/>
</dbReference>
<dbReference type="RefSeq" id="XP_047299349.1">
    <molecule id="Q96Q35-2"/>
    <property type="nucleotide sequence ID" value="XM_047443393.1"/>
</dbReference>
<dbReference type="SMR" id="Q96Q35"/>
<dbReference type="BioGRID" id="126239">
    <property type="interactions" value="39"/>
</dbReference>
<dbReference type="FunCoup" id="Q96Q35">
    <property type="interactions" value="5"/>
</dbReference>
<dbReference type="IntAct" id="Q96Q35">
    <property type="interactions" value="34"/>
</dbReference>
<dbReference type="STRING" id="9606.ENSP00000385098"/>
<dbReference type="iPTMnet" id="Q96Q35"/>
<dbReference type="PhosphoSitePlus" id="Q96Q35"/>
<dbReference type="BioMuta" id="ALS2CR12"/>
<dbReference type="DMDM" id="212278361"/>
<dbReference type="jPOST" id="Q96Q35"/>
<dbReference type="MassIVE" id="Q96Q35"/>
<dbReference type="PaxDb" id="9606-ENSP00000385098"/>
<dbReference type="PeptideAtlas" id="Q96Q35"/>
<dbReference type="ProteomicsDB" id="34028"/>
<dbReference type="ProteomicsDB" id="77818">
    <molecule id="Q96Q35-1"/>
</dbReference>
<dbReference type="Antibodypedia" id="34140">
    <property type="antibodies" value="81 antibodies from 19 providers"/>
</dbReference>
<dbReference type="DNASU" id="130540"/>
<dbReference type="Ensembl" id="ENST00000286190.9">
    <molecule id="Q96Q35-1"/>
    <property type="protein sequence ID" value="ENSP00000286190.5"/>
    <property type="gene ID" value="ENSG00000155749.13"/>
</dbReference>
<dbReference type="Ensembl" id="ENST00000392257.8">
    <molecule id="Q96Q35-2"/>
    <property type="protein sequence ID" value="ENSP00000376086.3"/>
    <property type="gene ID" value="ENSG00000155749.13"/>
</dbReference>
<dbReference type="Ensembl" id="ENST00000405148.6">
    <molecule id="Q96Q35-1"/>
    <property type="protein sequence ID" value="ENSP00000385098.2"/>
    <property type="gene ID" value="ENSG00000155749.13"/>
</dbReference>
<dbReference type="Ensembl" id="ENST00000439709.5">
    <molecule id="Q96Q35-2"/>
    <property type="protein sequence ID" value="ENSP00000412073.1"/>
    <property type="gene ID" value="ENSG00000155749.13"/>
</dbReference>
<dbReference type="GeneID" id="130540"/>
<dbReference type="KEGG" id="hsa:130540"/>
<dbReference type="MANE-Select" id="ENST00000392257.8">
    <molecule id="Q96Q35-2"/>
    <property type="protein sequence ID" value="ENSP00000376086.3"/>
    <property type="RefSeq nucleotide sequence ID" value="NM_001127391.3"/>
    <property type="RefSeq protein sequence ID" value="NP_001120863.1"/>
</dbReference>
<dbReference type="UCSC" id="uc002uya.5">
    <molecule id="Q96Q35-1"/>
    <property type="organism name" value="human"/>
</dbReference>
<dbReference type="AGR" id="HGNC:14439"/>
<dbReference type="CTD" id="130540"/>
<dbReference type="DisGeNET" id="130540"/>
<dbReference type="GeneCards" id="FLACC1"/>
<dbReference type="HGNC" id="HGNC:14439">
    <property type="gene designation" value="FLACC1"/>
</dbReference>
<dbReference type="HPA" id="ENSG00000155749">
    <property type="expression patterns" value="Tissue enhanced (choroid plexus, testis)"/>
</dbReference>
<dbReference type="MIM" id="619796">
    <property type="type" value="gene"/>
</dbReference>
<dbReference type="neXtProt" id="NX_Q96Q35"/>
<dbReference type="OpenTargets" id="ENSG00000155749"/>
<dbReference type="PharmGKB" id="PA24735"/>
<dbReference type="VEuPathDB" id="HostDB:ENSG00000155749"/>
<dbReference type="eggNOG" id="ENOG502R2KT">
    <property type="taxonomic scope" value="Eukaryota"/>
</dbReference>
<dbReference type="GeneTree" id="ENSGT00400000022323"/>
<dbReference type="HOGENOM" id="CLU_049696_0_0_1"/>
<dbReference type="InParanoid" id="Q96Q35"/>
<dbReference type="OMA" id="MEKEYKY"/>
<dbReference type="OrthoDB" id="10013155at2759"/>
<dbReference type="PAN-GO" id="Q96Q35">
    <property type="GO annotations" value="3 GO annotations based on evolutionary models"/>
</dbReference>
<dbReference type="PhylomeDB" id="Q96Q35"/>
<dbReference type="TreeFam" id="TF338239"/>
<dbReference type="PathwayCommons" id="Q96Q35"/>
<dbReference type="SignaLink" id="Q96Q35"/>
<dbReference type="BioGRID-ORCS" id="130540">
    <property type="hits" value="14 hits in 1138 CRISPR screens"/>
</dbReference>
<dbReference type="GenomeRNAi" id="130540"/>
<dbReference type="Pharos" id="Q96Q35">
    <property type="development level" value="Tbio"/>
</dbReference>
<dbReference type="PRO" id="PR:Q96Q35"/>
<dbReference type="Proteomes" id="UP000005640">
    <property type="component" value="Chromosome 2"/>
</dbReference>
<dbReference type="RNAct" id="Q96Q35">
    <property type="molecule type" value="protein"/>
</dbReference>
<dbReference type="Bgee" id="ENSG00000155749">
    <property type="expression patterns" value="Expressed in right uterine tube and 102 other cell types or tissues"/>
</dbReference>
<dbReference type="ExpressionAtlas" id="Q96Q35">
    <property type="expression patterns" value="baseline and differential"/>
</dbReference>
<dbReference type="GO" id="GO:0005737">
    <property type="term" value="C:cytoplasm"/>
    <property type="evidence" value="ECO:0000250"/>
    <property type="project" value="UniProtKB"/>
</dbReference>
<dbReference type="GO" id="GO:0031410">
    <property type="term" value="C:cytoplasmic vesicle"/>
    <property type="evidence" value="ECO:0000250"/>
    <property type="project" value="UniProtKB"/>
</dbReference>
<dbReference type="GO" id="GO:0001520">
    <property type="term" value="C:outer dense fiber"/>
    <property type="evidence" value="ECO:0000250"/>
    <property type="project" value="UniProtKB"/>
</dbReference>
<dbReference type="GO" id="GO:0036126">
    <property type="term" value="C:sperm flagellum"/>
    <property type="evidence" value="ECO:0000250"/>
    <property type="project" value="UniProtKB"/>
</dbReference>
<dbReference type="InterPro" id="IPR026674">
    <property type="entry name" value="FLACC1"/>
</dbReference>
<dbReference type="PANTHER" id="PTHR21707">
    <property type="entry name" value="FLAGELLUM-ASSOCIATED COILED-COIL DOMAIN-CONTAINING PROTEIN 1"/>
    <property type="match status" value="1"/>
</dbReference>
<dbReference type="PANTHER" id="PTHR21707:SF42">
    <property type="entry name" value="FLAGELLUM-ASSOCIATED COILED-COIL DOMAIN-CONTAINING PROTEIN 1"/>
    <property type="match status" value="1"/>
</dbReference>
<evidence type="ECO:0000250" key="1">
    <source>
        <dbReference type="UniProtKB" id="Q8BVM7"/>
    </source>
</evidence>
<evidence type="ECO:0000255" key="2"/>
<evidence type="ECO:0000256" key="3">
    <source>
        <dbReference type="SAM" id="MobiDB-lite"/>
    </source>
</evidence>
<evidence type="ECO:0000269" key="4">
    <source>
    </source>
</evidence>
<evidence type="ECO:0000269" key="5">
    <source>
    </source>
</evidence>
<evidence type="ECO:0000303" key="6">
    <source>
    </source>
</evidence>
<evidence type="ECO:0000305" key="7"/>
<evidence type="ECO:0000312" key="8">
    <source>
        <dbReference type="HGNC" id="HGNC:14439"/>
    </source>
</evidence>
<evidence type="ECO:0007744" key="9">
    <source>
    </source>
</evidence>
<proteinExistence type="evidence at protein level"/>
<sequence length="445" mass="52439">MYPNPLIYCTCWDPWNLGPRKLIKTPQLPRKNSTGSSKLTPLVPAPKNHNYLQPTKPVVSPKMKIHSARQEETNKSFYEVINVSPGYQLVRNREQISVTLGDEMFDRKKRWESEIPDKGRFSRTNIISDLEEQISELTAIIEQMNRDHQSAQKLLSSEMDLRCAEMKQNFENKNRELKEAHEAELSELENNYKAALKAEKLAAQEKLEEMGKEYKYLKNMFRTYQDSIYDEMEEKWSKQKAKWKKDEKFERENILLQQKKKMTKKFEMESGEEDKKINESCSAVFENFIQEKEELLKQHQSDTLQLEELRKTKEVPWRRDQINRHWHDVLQQLLLMQVMQEELHAQALILESLNTNLYYTQLELQKEKAIVGNLEKMLQTKFAETEEKYKHTIQILTEENIHLKQKIISKNEEICEGCSGRLASITVSKDDSDTVQDGSKKGQES</sequence>
<accession>Q96Q35</accession>
<accession>G5E9S3</accession>
<accession>Q53TT6</accession>
<accession>Q8N1B6</accession>
<reference key="1">
    <citation type="journal article" date="2001" name="Nat. Genet.">
        <title>A gene encoding a putative GTPase regulator is mutated in familial amyotrophic lateral sclerosis 2.</title>
        <authorList>
            <person name="Hadano S."/>
            <person name="Hand C.K."/>
            <person name="Osuga H."/>
            <person name="Yanagisawa Y."/>
            <person name="Otomo A."/>
            <person name="Devon R.S."/>
            <person name="Miyamoto N."/>
            <person name="Showguchi-Miyata J."/>
            <person name="Okada Y."/>
            <person name="Singaraja R."/>
            <person name="Figlewicz D.A."/>
            <person name="Kwiatkowski T."/>
            <person name="Hosler B.A."/>
            <person name="Sagie T."/>
            <person name="Skaug J."/>
            <person name="Nasir J."/>
            <person name="Brown R.H. Jr."/>
            <person name="Scherer S.W."/>
            <person name="Rouleau G.A."/>
            <person name="Hayden M.R."/>
            <person name="Ikeda J.-E."/>
        </authorList>
    </citation>
    <scope>NUCLEOTIDE SEQUENCE [MRNA] (ISOFORM 1)</scope>
    <scope>VARIANT LEU-43</scope>
    <source>
        <tissue>Testis</tissue>
    </source>
</reference>
<reference key="2">
    <citation type="journal article" date="2005" name="Nature">
        <title>Generation and annotation of the DNA sequences of human chromosomes 2 and 4.</title>
        <authorList>
            <person name="Hillier L.W."/>
            <person name="Graves T.A."/>
            <person name="Fulton R.S."/>
            <person name="Fulton L.A."/>
            <person name="Pepin K.H."/>
            <person name="Minx P."/>
            <person name="Wagner-McPherson C."/>
            <person name="Layman D."/>
            <person name="Wylie K."/>
            <person name="Sekhon M."/>
            <person name="Becker M.C."/>
            <person name="Fewell G.A."/>
            <person name="Delehaunty K.D."/>
            <person name="Miner T.L."/>
            <person name="Nash W.E."/>
            <person name="Kremitzki C."/>
            <person name="Oddy L."/>
            <person name="Du H."/>
            <person name="Sun H."/>
            <person name="Bradshaw-Cordum H."/>
            <person name="Ali J."/>
            <person name="Carter J."/>
            <person name="Cordes M."/>
            <person name="Harris A."/>
            <person name="Isak A."/>
            <person name="van Brunt A."/>
            <person name="Nguyen C."/>
            <person name="Du F."/>
            <person name="Courtney L."/>
            <person name="Kalicki J."/>
            <person name="Ozersky P."/>
            <person name="Abbott S."/>
            <person name="Armstrong J."/>
            <person name="Belter E.A."/>
            <person name="Caruso L."/>
            <person name="Cedroni M."/>
            <person name="Cotton M."/>
            <person name="Davidson T."/>
            <person name="Desai A."/>
            <person name="Elliott G."/>
            <person name="Erb T."/>
            <person name="Fronick C."/>
            <person name="Gaige T."/>
            <person name="Haakenson W."/>
            <person name="Haglund K."/>
            <person name="Holmes A."/>
            <person name="Harkins R."/>
            <person name="Kim K."/>
            <person name="Kruchowski S.S."/>
            <person name="Strong C.M."/>
            <person name="Grewal N."/>
            <person name="Goyea E."/>
            <person name="Hou S."/>
            <person name="Levy A."/>
            <person name="Martinka S."/>
            <person name="Mead K."/>
            <person name="McLellan M.D."/>
            <person name="Meyer R."/>
            <person name="Randall-Maher J."/>
            <person name="Tomlinson C."/>
            <person name="Dauphin-Kohlberg S."/>
            <person name="Kozlowicz-Reilly A."/>
            <person name="Shah N."/>
            <person name="Swearengen-Shahid S."/>
            <person name="Snider J."/>
            <person name="Strong J.T."/>
            <person name="Thompson J."/>
            <person name="Yoakum M."/>
            <person name="Leonard S."/>
            <person name="Pearman C."/>
            <person name="Trani L."/>
            <person name="Radionenko M."/>
            <person name="Waligorski J.E."/>
            <person name="Wang C."/>
            <person name="Rock S.M."/>
            <person name="Tin-Wollam A.-M."/>
            <person name="Maupin R."/>
            <person name="Latreille P."/>
            <person name="Wendl M.C."/>
            <person name="Yang S.-P."/>
            <person name="Pohl C."/>
            <person name="Wallis J.W."/>
            <person name="Spieth J."/>
            <person name="Bieri T.A."/>
            <person name="Berkowicz N."/>
            <person name="Nelson J.O."/>
            <person name="Osborne J."/>
            <person name="Ding L."/>
            <person name="Meyer R."/>
            <person name="Sabo A."/>
            <person name="Shotland Y."/>
            <person name="Sinha P."/>
            <person name="Wohldmann P.E."/>
            <person name="Cook L.L."/>
            <person name="Hickenbotham M.T."/>
            <person name="Eldred J."/>
            <person name="Williams D."/>
            <person name="Jones T.A."/>
            <person name="She X."/>
            <person name="Ciccarelli F.D."/>
            <person name="Izaurralde E."/>
            <person name="Taylor J."/>
            <person name="Schmutz J."/>
            <person name="Myers R.M."/>
            <person name="Cox D.R."/>
            <person name="Huang X."/>
            <person name="McPherson J.D."/>
            <person name="Mardis E.R."/>
            <person name="Clifton S.W."/>
            <person name="Warren W.C."/>
            <person name="Chinwalla A.T."/>
            <person name="Eddy S.R."/>
            <person name="Marra M.A."/>
            <person name="Ovcharenko I."/>
            <person name="Furey T.S."/>
            <person name="Miller W."/>
            <person name="Eichler E.E."/>
            <person name="Bork P."/>
            <person name="Suyama M."/>
            <person name="Torrents D."/>
            <person name="Waterston R.H."/>
            <person name="Wilson R.K."/>
        </authorList>
    </citation>
    <scope>NUCLEOTIDE SEQUENCE [LARGE SCALE GENOMIC DNA]</scope>
</reference>
<reference key="3">
    <citation type="submission" date="2005-07" db="EMBL/GenBank/DDBJ databases">
        <authorList>
            <person name="Mural R.J."/>
            <person name="Istrail S."/>
            <person name="Sutton G.G."/>
            <person name="Florea L."/>
            <person name="Halpern A.L."/>
            <person name="Mobarry C.M."/>
            <person name="Lippert R."/>
            <person name="Walenz B."/>
            <person name="Shatkay H."/>
            <person name="Dew I."/>
            <person name="Miller J.R."/>
            <person name="Flanigan M.J."/>
            <person name="Edwards N.J."/>
            <person name="Bolanos R."/>
            <person name="Fasulo D."/>
            <person name="Halldorsson B.V."/>
            <person name="Hannenhalli S."/>
            <person name="Turner R."/>
            <person name="Yooseph S."/>
            <person name="Lu F."/>
            <person name="Nusskern D.R."/>
            <person name="Shue B.C."/>
            <person name="Zheng X.H."/>
            <person name="Zhong F."/>
            <person name="Delcher A.L."/>
            <person name="Huson D.H."/>
            <person name="Kravitz S.A."/>
            <person name="Mouchard L."/>
            <person name="Reinert K."/>
            <person name="Remington K.A."/>
            <person name="Clark A.G."/>
            <person name="Waterman M.S."/>
            <person name="Eichler E.E."/>
            <person name="Adams M.D."/>
            <person name="Hunkapiller M.W."/>
            <person name="Myers E.W."/>
            <person name="Venter J.C."/>
        </authorList>
    </citation>
    <scope>NUCLEOTIDE SEQUENCE [LARGE SCALE GENOMIC DNA]</scope>
</reference>
<reference key="4">
    <citation type="journal article" date="2004" name="Genome Res.">
        <title>The status, quality, and expansion of the NIH full-length cDNA project: the Mammalian Gene Collection (MGC).</title>
        <authorList>
            <consortium name="The MGC Project Team"/>
        </authorList>
    </citation>
    <scope>NUCLEOTIDE SEQUENCE [LARGE SCALE MRNA] (ISOFORM 2)</scope>
    <scope>VARIANT LEU-43</scope>
    <source>
        <tissue>Brain</tissue>
    </source>
</reference>
<reference key="5">
    <citation type="journal article" date="2009" name="Science">
        <title>Lysine acetylation targets protein complexes and co-regulates major cellular functions.</title>
        <authorList>
            <person name="Choudhary C."/>
            <person name="Kumar C."/>
            <person name="Gnad F."/>
            <person name="Nielsen M.L."/>
            <person name="Rehman M."/>
            <person name="Walther T.C."/>
            <person name="Olsen J.V."/>
            <person name="Mann M."/>
        </authorList>
    </citation>
    <scope>ACETYLATION [LARGE SCALE ANALYSIS] AT LYS-376</scope>
    <scope>IDENTIFICATION BY MASS SPECTROMETRY [LARGE SCALE ANALYSIS]</scope>
</reference>
<name>FACC1_HUMAN</name>
<protein>
    <recommendedName>
        <fullName evidence="7">Flagellum-associated coiled-coil domain-containing protein 1</fullName>
    </recommendedName>
    <alternativeName>
        <fullName>Amyotrophic lateral sclerosis 2 chromosomal region candidate gene 12 protein</fullName>
    </alternativeName>
</protein>
<keyword id="KW-0007">Acetylation</keyword>
<keyword id="KW-0025">Alternative splicing</keyword>
<keyword id="KW-0966">Cell projection</keyword>
<keyword id="KW-0969">Cilium</keyword>
<keyword id="KW-0175">Coiled coil</keyword>
<keyword id="KW-0963">Cytoplasm</keyword>
<keyword id="KW-0282">Flagellum</keyword>
<keyword id="KW-1267">Proteomics identification</keyword>
<keyword id="KW-1185">Reference proteome</keyword>